<reference key="1">
    <citation type="journal article" date="2000" name="Proc. Natl. Acad. Sci. U.S.A.">
        <title>Archaeal adaptation to higher temperatures revealed by genomic sequence of Thermoplasma volcanium.</title>
        <authorList>
            <person name="Kawashima T."/>
            <person name="Amano N."/>
            <person name="Koike H."/>
            <person name="Makino S."/>
            <person name="Higuchi S."/>
            <person name="Kawashima-Ohya Y."/>
            <person name="Watanabe K."/>
            <person name="Yamazaki M."/>
            <person name="Kanehori K."/>
            <person name="Kawamoto T."/>
            <person name="Nunoshiba T."/>
            <person name="Yamamoto Y."/>
            <person name="Aramaki H."/>
            <person name="Makino K."/>
            <person name="Suzuki M."/>
        </authorList>
    </citation>
    <scope>NUCLEOTIDE SEQUENCE [LARGE SCALE GENOMIC DNA]</scope>
    <source>
        <strain>ATCC 51530 / DSM 4299 / JCM 9571 / NBRC 15438 / GSS1</strain>
    </source>
</reference>
<feature type="chain" id="PRO_0000098596" description="Isoleucine--tRNA ligase">
    <location>
        <begin position="1"/>
        <end position="1028"/>
    </location>
</feature>
<feature type="short sequence motif" description="'HIGH' region">
    <location>
        <begin position="51"/>
        <end position="61"/>
    </location>
</feature>
<feature type="short sequence motif" description="'KMSKS' region">
    <location>
        <begin position="591"/>
        <end position="595"/>
    </location>
</feature>
<feature type="binding site" evidence="1">
    <location>
        <position position="594"/>
    </location>
    <ligand>
        <name>ATP</name>
        <dbReference type="ChEBI" id="CHEBI:30616"/>
    </ligand>
</feature>
<protein>
    <recommendedName>
        <fullName evidence="1">Isoleucine--tRNA ligase</fullName>
        <ecNumber evidence="1">6.1.1.5</ecNumber>
    </recommendedName>
    <alternativeName>
        <fullName evidence="1">Isoleucyl-tRNA synthetase</fullName>
        <shortName evidence="1">IleRS</shortName>
    </alternativeName>
</protein>
<dbReference type="EC" id="6.1.1.5" evidence="1"/>
<dbReference type="EMBL" id="BA000011">
    <property type="protein sequence ID" value="BAB59985.1"/>
    <property type="molecule type" value="Genomic_DNA"/>
</dbReference>
<dbReference type="RefSeq" id="WP_010917087.1">
    <property type="nucleotide sequence ID" value="NC_002689.2"/>
</dbReference>
<dbReference type="SMR" id="Q97AG7"/>
<dbReference type="STRING" id="273116.gene:9381635"/>
<dbReference type="PaxDb" id="273116-14325060"/>
<dbReference type="GeneID" id="1441935"/>
<dbReference type="KEGG" id="tvo:TVG0867938"/>
<dbReference type="eggNOG" id="arCOG00807">
    <property type="taxonomic scope" value="Archaea"/>
</dbReference>
<dbReference type="HOGENOM" id="CLU_001493_1_1_2"/>
<dbReference type="OrthoDB" id="30823at2157"/>
<dbReference type="PhylomeDB" id="Q97AG7"/>
<dbReference type="Proteomes" id="UP000001017">
    <property type="component" value="Chromosome"/>
</dbReference>
<dbReference type="GO" id="GO:0005737">
    <property type="term" value="C:cytoplasm"/>
    <property type="evidence" value="ECO:0007669"/>
    <property type="project" value="UniProtKB-SubCell"/>
</dbReference>
<dbReference type="GO" id="GO:0002161">
    <property type="term" value="F:aminoacyl-tRNA deacylase activity"/>
    <property type="evidence" value="ECO:0007669"/>
    <property type="project" value="InterPro"/>
</dbReference>
<dbReference type="GO" id="GO:0005524">
    <property type="term" value="F:ATP binding"/>
    <property type="evidence" value="ECO:0007669"/>
    <property type="project" value="UniProtKB-UniRule"/>
</dbReference>
<dbReference type="GO" id="GO:0004822">
    <property type="term" value="F:isoleucine-tRNA ligase activity"/>
    <property type="evidence" value="ECO:0007669"/>
    <property type="project" value="UniProtKB-UniRule"/>
</dbReference>
<dbReference type="GO" id="GO:0000049">
    <property type="term" value="F:tRNA binding"/>
    <property type="evidence" value="ECO:0007669"/>
    <property type="project" value="InterPro"/>
</dbReference>
<dbReference type="GO" id="GO:0008270">
    <property type="term" value="F:zinc ion binding"/>
    <property type="evidence" value="ECO:0007669"/>
    <property type="project" value="UniProtKB-UniRule"/>
</dbReference>
<dbReference type="GO" id="GO:0006428">
    <property type="term" value="P:isoleucyl-tRNA aminoacylation"/>
    <property type="evidence" value="ECO:0007669"/>
    <property type="project" value="UniProtKB-UniRule"/>
</dbReference>
<dbReference type="CDD" id="cd07961">
    <property type="entry name" value="Anticodon_Ia_Ile_ABEc"/>
    <property type="match status" value="1"/>
</dbReference>
<dbReference type="CDD" id="cd00818">
    <property type="entry name" value="IleRS_core"/>
    <property type="match status" value="1"/>
</dbReference>
<dbReference type="Gene3D" id="3.40.50.620">
    <property type="entry name" value="HUPs"/>
    <property type="match status" value="2"/>
</dbReference>
<dbReference type="Gene3D" id="1.10.730.10">
    <property type="entry name" value="Isoleucyl-tRNA Synthetase, Domain 1"/>
    <property type="match status" value="1"/>
</dbReference>
<dbReference type="Gene3D" id="3.90.740.10">
    <property type="entry name" value="Valyl/Leucyl/Isoleucyl-tRNA synthetase, editing domain"/>
    <property type="match status" value="1"/>
</dbReference>
<dbReference type="HAMAP" id="MF_02003">
    <property type="entry name" value="Ile_tRNA_synth_type2"/>
    <property type="match status" value="1"/>
</dbReference>
<dbReference type="InterPro" id="IPR001412">
    <property type="entry name" value="aa-tRNA-synth_I_CS"/>
</dbReference>
<dbReference type="InterPro" id="IPR002300">
    <property type="entry name" value="aa-tRNA-synth_Ia"/>
</dbReference>
<dbReference type="InterPro" id="IPR033709">
    <property type="entry name" value="Anticodon_Ile_ABEc"/>
</dbReference>
<dbReference type="InterPro" id="IPR002301">
    <property type="entry name" value="Ile-tRNA-ligase"/>
</dbReference>
<dbReference type="InterPro" id="IPR023586">
    <property type="entry name" value="Ile-tRNA-ligase_type2"/>
</dbReference>
<dbReference type="InterPro" id="IPR013155">
    <property type="entry name" value="M/V/L/I-tRNA-synth_anticd-bd"/>
</dbReference>
<dbReference type="InterPro" id="IPR014729">
    <property type="entry name" value="Rossmann-like_a/b/a_fold"/>
</dbReference>
<dbReference type="InterPro" id="IPR009080">
    <property type="entry name" value="tRNAsynth_Ia_anticodon-bd"/>
</dbReference>
<dbReference type="InterPro" id="IPR009008">
    <property type="entry name" value="Val/Leu/Ile-tRNA-synth_edit"/>
</dbReference>
<dbReference type="NCBIfam" id="TIGR00392">
    <property type="entry name" value="ileS"/>
    <property type="match status" value="1"/>
</dbReference>
<dbReference type="PANTHER" id="PTHR42780:SF1">
    <property type="entry name" value="ISOLEUCINE--TRNA LIGASE, CYTOPLASMIC"/>
    <property type="match status" value="1"/>
</dbReference>
<dbReference type="PANTHER" id="PTHR42780">
    <property type="entry name" value="SOLEUCYL-TRNA SYNTHETASE"/>
    <property type="match status" value="1"/>
</dbReference>
<dbReference type="Pfam" id="PF08264">
    <property type="entry name" value="Anticodon_1"/>
    <property type="match status" value="1"/>
</dbReference>
<dbReference type="Pfam" id="PF19302">
    <property type="entry name" value="DUF5915"/>
    <property type="match status" value="1"/>
</dbReference>
<dbReference type="Pfam" id="PF00133">
    <property type="entry name" value="tRNA-synt_1"/>
    <property type="match status" value="1"/>
</dbReference>
<dbReference type="PRINTS" id="PR00984">
    <property type="entry name" value="TRNASYNTHILE"/>
</dbReference>
<dbReference type="SUPFAM" id="SSF47323">
    <property type="entry name" value="Anticodon-binding domain of a subclass of class I aminoacyl-tRNA synthetases"/>
    <property type="match status" value="2"/>
</dbReference>
<dbReference type="SUPFAM" id="SSF52374">
    <property type="entry name" value="Nucleotidylyl transferase"/>
    <property type="match status" value="1"/>
</dbReference>
<dbReference type="SUPFAM" id="SSF50677">
    <property type="entry name" value="ValRS/IleRS/LeuRS editing domain"/>
    <property type="match status" value="1"/>
</dbReference>
<dbReference type="PROSITE" id="PS00178">
    <property type="entry name" value="AA_TRNA_LIGASE_I"/>
    <property type="match status" value="1"/>
</dbReference>
<proteinExistence type="inferred from homology"/>
<gene>
    <name evidence="1" type="primary">ileS</name>
    <name type="ordered locus">TV0843</name>
    <name type="ORF">TVG0867938</name>
</gene>
<name>SYI_THEVO</name>
<keyword id="KW-0030">Aminoacyl-tRNA synthetase</keyword>
<keyword id="KW-0067">ATP-binding</keyword>
<keyword id="KW-0963">Cytoplasm</keyword>
<keyword id="KW-0436">Ligase</keyword>
<keyword id="KW-0479">Metal-binding</keyword>
<keyword id="KW-0547">Nucleotide-binding</keyword>
<keyword id="KW-0648">Protein biosynthesis</keyword>
<keyword id="KW-0862">Zinc</keyword>
<accession>Q97AG7</accession>
<organism>
    <name type="scientific">Thermoplasma volcanium (strain ATCC 51530 / DSM 4299 / JCM 9571 / NBRC 15438 / GSS1)</name>
    <dbReference type="NCBI Taxonomy" id="273116"/>
    <lineage>
        <taxon>Archaea</taxon>
        <taxon>Methanobacteriati</taxon>
        <taxon>Thermoplasmatota</taxon>
        <taxon>Thermoplasmata</taxon>
        <taxon>Thermoplasmatales</taxon>
        <taxon>Thermoplasmataceae</taxon>
        <taxon>Thermoplasma</taxon>
    </lineage>
</organism>
<evidence type="ECO:0000255" key="1">
    <source>
        <dbReference type="HAMAP-Rule" id="MF_02003"/>
    </source>
</evidence>
<sequence length="1028" mass="119494">MQAQRYRLIEQGNTIMDIDNEILRYWNDHAINEKIFKKEGTKKFVFLEGPPTANGRPHIGHAMTRTIKDIVLRYNTMTGHKIYRRYGGWDCHGLPVELEAEKYFGFKTKSDIINYGVEKFNSYCRDSVFRYIDEWKTVDQIIGFSIDHSGDYITLRNEYIESEWYVLKYIYENGLLYKDYTVVPYCPRCETSLSSHEVAQGYKDVKDPSVYVRFKEKGSENTYFVAWTTTPWTLPSNEFLVVNPDIEYSLIEYNNAKYYVASSRAQYIFKDFKVLKKMKGFELAGKGYEQLLPFLDPPAGALRVVTGDFVTDIDGSGIVHAAPAFGSDDYQIGKRENVPILNPVDKNGRFSDERLPWYGKKVREANEDIIVYLKNNGLLIKSEKYEHSYPFCYRCDTPLLYYPLDAWFIRVSSVRDKLVENNEKIRWKPDYLKHGRFGNFLDEAKDWNLSRDRFWGTPLPVWRCRNNHVRFIGSRKEIEEMGATVPQDLHRPYIDEVKFVCPDCGEEMRREPYVIDTWFDSGSATYAAMHYPFEDNFDPSSDLPVSFITEAIDQTRGWFYVLHVISTIMFNKNAYDSALSISFILDEQGRKMSKSKGNSVFALDYLKQVAPDSLRLFFLYGAPWKSKNLDRKIIDEVSRRVISTLLNVYSFFAYNANIDGFEFKGILEAKDTLDKWLISKINTFIIESRRAYDDLDFHEVVRLSMDFVDNLSNFYLRLSRRRFWAEDVTEDKLAAYSTLYTAIMTCSKVLAPIVPFVSDYLYLSLHGPYESIHLDSFPEPDTSKIDHDLEKRMDQAYSVIETVRRIRQEINIKGRQPVKEILLSGNIDPEIIPVVSQEVNAKEIRIVSSEQRPLKYTVDLKMETAAPILRSSVNSVREALKSIDGKAAFDAVQNGGKLRVLDHELTGEMLNISTIPDPDYGYSRDEKNGIDVFVNKRIDRNEYLEGLAREIVRRIQLMRKEMNLDYTDRINVWIDPVGDFSDAIDKFESYIKAETQCDSLNVGHTDDLRKWEIGDETIGIRIEKVVPK</sequence>
<comment type="function">
    <text evidence="1">Catalyzes the attachment of isoleucine to tRNA(Ile). As IleRS can inadvertently accommodate and process structurally similar amino acids such as valine, to avoid such errors it has two additional distinct tRNA(Ile)-dependent editing activities. One activity is designated as 'pretransfer' editing and involves the hydrolysis of activated Val-AMP. The other activity is designated 'posttransfer' editing and involves deacylation of mischarged Val-tRNA(Ile).</text>
</comment>
<comment type="catalytic activity">
    <reaction evidence="1">
        <text>tRNA(Ile) + L-isoleucine + ATP = L-isoleucyl-tRNA(Ile) + AMP + diphosphate</text>
        <dbReference type="Rhea" id="RHEA:11060"/>
        <dbReference type="Rhea" id="RHEA-COMP:9666"/>
        <dbReference type="Rhea" id="RHEA-COMP:9695"/>
        <dbReference type="ChEBI" id="CHEBI:30616"/>
        <dbReference type="ChEBI" id="CHEBI:33019"/>
        <dbReference type="ChEBI" id="CHEBI:58045"/>
        <dbReference type="ChEBI" id="CHEBI:78442"/>
        <dbReference type="ChEBI" id="CHEBI:78528"/>
        <dbReference type="ChEBI" id="CHEBI:456215"/>
        <dbReference type="EC" id="6.1.1.5"/>
    </reaction>
</comment>
<comment type="cofactor">
    <cofactor evidence="1">
        <name>Zn(2+)</name>
        <dbReference type="ChEBI" id="CHEBI:29105"/>
    </cofactor>
</comment>
<comment type="subunit">
    <text evidence="1">Monomer.</text>
</comment>
<comment type="subcellular location">
    <subcellularLocation>
        <location evidence="1">Cytoplasm</location>
    </subcellularLocation>
</comment>
<comment type="domain">
    <text evidence="1">IleRS has two distinct active sites: one for aminoacylation and one for editing. The misactivated valine is translocated from the active site to the editing site, which sterically excludes the correctly activated isoleucine. The single editing site contains two valyl binding pockets, one specific for each substrate (Val-AMP or Val-tRNA(Ile)).</text>
</comment>
<comment type="similarity">
    <text evidence="1">Belongs to the class-I aminoacyl-tRNA synthetase family. IleS type 2 subfamily.</text>
</comment>